<protein>
    <recommendedName>
        <fullName evidence="8">Nucleus-vacuole junction protein 2</fullName>
    </recommendedName>
</protein>
<evidence type="ECO:0000250" key="1"/>
<evidence type="ECO:0000250" key="2">
    <source>
        <dbReference type="UniProtKB" id="Q06833"/>
    </source>
</evidence>
<evidence type="ECO:0000255" key="3"/>
<evidence type="ECO:0000255" key="4">
    <source>
        <dbReference type="PROSITE-ProRule" id="PRU01194"/>
    </source>
</evidence>
<evidence type="ECO:0000256" key="5">
    <source>
        <dbReference type="SAM" id="MobiDB-lite"/>
    </source>
</evidence>
<evidence type="ECO:0000269" key="6">
    <source>
    </source>
</evidence>
<evidence type="ECO:0000269" key="7">
    <source>
    </source>
</evidence>
<evidence type="ECO:0000305" key="8"/>
<evidence type="ECO:0000312" key="9">
    <source>
        <dbReference type="PomBase" id="SPBC23G7.06c"/>
    </source>
</evidence>
<keyword id="KW-0256">Endoplasmic reticulum</keyword>
<keyword id="KW-0325">Glycoprotein</keyword>
<keyword id="KW-0445">Lipid transport</keyword>
<keyword id="KW-0446">Lipid-binding</keyword>
<keyword id="KW-0472">Membrane</keyword>
<keyword id="KW-0539">Nucleus</keyword>
<keyword id="KW-0597">Phosphoprotein</keyword>
<keyword id="KW-1185">Reference proteome</keyword>
<keyword id="KW-0735">Signal-anchor</keyword>
<keyword id="KW-0812">Transmembrane</keyword>
<keyword id="KW-1133">Transmembrane helix</keyword>
<keyword id="KW-0813">Transport</keyword>
<gene>
    <name type="primary">nvj2</name>
    <name evidence="9" type="ORF">SPBC23G7.06c</name>
</gene>
<reference key="1">
    <citation type="journal article" date="2002" name="Nature">
        <title>The genome sequence of Schizosaccharomyces pombe.</title>
        <authorList>
            <person name="Wood V."/>
            <person name="Gwilliam R."/>
            <person name="Rajandream M.A."/>
            <person name="Lyne M.H."/>
            <person name="Lyne R."/>
            <person name="Stewart A."/>
            <person name="Sgouros J.G."/>
            <person name="Peat N."/>
            <person name="Hayles J."/>
            <person name="Baker S.G."/>
            <person name="Basham D."/>
            <person name="Bowman S."/>
            <person name="Brooks K."/>
            <person name="Brown D."/>
            <person name="Brown S."/>
            <person name="Chillingworth T."/>
            <person name="Churcher C.M."/>
            <person name="Collins M."/>
            <person name="Connor R."/>
            <person name="Cronin A."/>
            <person name="Davis P."/>
            <person name="Feltwell T."/>
            <person name="Fraser A."/>
            <person name="Gentles S."/>
            <person name="Goble A."/>
            <person name="Hamlin N."/>
            <person name="Harris D.E."/>
            <person name="Hidalgo J."/>
            <person name="Hodgson G."/>
            <person name="Holroyd S."/>
            <person name="Hornsby T."/>
            <person name="Howarth S."/>
            <person name="Huckle E.J."/>
            <person name="Hunt S."/>
            <person name="Jagels K."/>
            <person name="James K.D."/>
            <person name="Jones L."/>
            <person name="Jones M."/>
            <person name="Leather S."/>
            <person name="McDonald S."/>
            <person name="McLean J."/>
            <person name="Mooney P."/>
            <person name="Moule S."/>
            <person name="Mungall K.L."/>
            <person name="Murphy L.D."/>
            <person name="Niblett D."/>
            <person name="Odell C."/>
            <person name="Oliver K."/>
            <person name="O'Neil S."/>
            <person name="Pearson D."/>
            <person name="Quail M.A."/>
            <person name="Rabbinowitsch E."/>
            <person name="Rutherford K.M."/>
            <person name="Rutter S."/>
            <person name="Saunders D."/>
            <person name="Seeger K."/>
            <person name="Sharp S."/>
            <person name="Skelton J."/>
            <person name="Simmonds M.N."/>
            <person name="Squares R."/>
            <person name="Squares S."/>
            <person name="Stevens K."/>
            <person name="Taylor K."/>
            <person name="Taylor R.G."/>
            <person name="Tivey A."/>
            <person name="Walsh S.V."/>
            <person name="Warren T."/>
            <person name="Whitehead S."/>
            <person name="Woodward J.R."/>
            <person name="Volckaert G."/>
            <person name="Aert R."/>
            <person name="Robben J."/>
            <person name="Grymonprez B."/>
            <person name="Weltjens I."/>
            <person name="Vanstreels E."/>
            <person name="Rieger M."/>
            <person name="Schaefer M."/>
            <person name="Mueller-Auer S."/>
            <person name="Gabel C."/>
            <person name="Fuchs M."/>
            <person name="Duesterhoeft A."/>
            <person name="Fritzc C."/>
            <person name="Holzer E."/>
            <person name="Moestl D."/>
            <person name="Hilbert H."/>
            <person name="Borzym K."/>
            <person name="Langer I."/>
            <person name="Beck A."/>
            <person name="Lehrach H."/>
            <person name="Reinhardt R."/>
            <person name="Pohl T.M."/>
            <person name="Eger P."/>
            <person name="Zimmermann W."/>
            <person name="Wedler H."/>
            <person name="Wambutt R."/>
            <person name="Purnelle B."/>
            <person name="Goffeau A."/>
            <person name="Cadieu E."/>
            <person name="Dreano S."/>
            <person name="Gloux S."/>
            <person name="Lelaure V."/>
            <person name="Mottier S."/>
            <person name="Galibert F."/>
            <person name="Aves S.J."/>
            <person name="Xiang Z."/>
            <person name="Hunt C."/>
            <person name="Moore K."/>
            <person name="Hurst S.M."/>
            <person name="Lucas M."/>
            <person name="Rochet M."/>
            <person name="Gaillardin C."/>
            <person name="Tallada V.A."/>
            <person name="Garzon A."/>
            <person name="Thode G."/>
            <person name="Daga R.R."/>
            <person name="Cruzado L."/>
            <person name="Jimenez J."/>
            <person name="Sanchez M."/>
            <person name="del Rey F."/>
            <person name="Benito J."/>
            <person name="Dominguez A."/>
            <person name="Revuelta J.L."/>
            <person name="Moreno S."/>
            <person name="Armstrong J."/>
            <person name="Forsburg S.L."/>
            <person name="Cerutti L."/>
            <person name="Lowe T."/>
            <person name="McCombie W.R."/>
            <person name="Paulsen I."/>
            <person name="Potashkin J."/>
            <person name="Shpakovski G.V."/>
            <person name="Ussery D."/>
            <person name="Barrell B.G."/>
            <person name="Nurse P."/>
        </authorList>
    </citation>
    <scope>NUCLEOTIDE SEQUENCE [LARGE SCALE GENOMIC DNA]</scope>
    <source>
        <strain>972 / ATCC 24843</strain>
    </source>
</reference>
<reference key="2">
    <citation type="journal article" date="2006" name="Nat. Biotechnol.">
        <title>ORFeome cloning and global analysis of protein localization in the fission yeast Schizosaccharomyces pombe.</title>
        <authorList>
            <person name="Matsuyama A."/>
            <person name="Arai R."/>
            <person name="Yashiroda Y."/>
            <person name="Shirai A."/>
            <person name="Kamata A."/>
            <person name="Sekido S."/>
            <person name="Kobayashi Y."/>
            <person name="Hashimoto A."/>
            <person name="Hamamoto M."/>
            <person name="Hiraoka Y."/>
            <person name="Horinouchi S."/>
            <person name="Yoshida M."/>
        </authorList>
    </citation>
    <scope>IDENTIFICATION OF FRAMESHIFT</scope>
    <scope>SUBCELLULAR LOCATION [LARGE SCALE ANALYSIS]</scope>
    <source>
        <strain>972 / ATCC 24843</strain>
        <strain>JY3</strain>
    </source>
</reference>
<reference key="3">
    <citation type="journal article" date="2008" name="J. Proteome Res.">
        <title>Phosphoproteome analysis of fission yeast.</title>
        <authorList>
            <person name="Wilson-Grady J.T."/>
            <person name="Villen J."/>
            <person name="Gygi S.P."/>
        </authorList>
    </citation>
    <scope>PHOSPHORYLATION [LARGE SCALE ANALYSIS] AT SER-473</scope>
    <scope>IDENTIFICATION BY MASS SPECTROMETRY</scope>
</reference>
<name>NVJ2_SCHPO</name>
<comment type="function">
    <text evidence="2">During endoplasmic reticulum (ER) stress or when cellular ceramide levels increase, induces contacts between the ER and medial-Golgi complex to facilitate non-vesicular transport of ceramides from the ER to the Golgi complex where they are converted to complex sphingolipids, preventing toxic ceramide accumulation.</text>
</comment>
<comment type="subcellular location">
    <subcellularLocation>
        <location evidence="6">Endoplasmic reticulum membrane</location>
        <topology evidence="8">Single-pass type II membrane protein</topology>
    </subcellularLocation>
    <subcellularLocation>
        <location evidence="2">Nucleus membrane</location>
        <topology evidence="8">Single-pass type II membrane protein</topology>
    </subcellularLocation>
    <text evidence="2">Enriched at the nucleus-vacuole junction (By similarity). During endoplasmic reticulum (ER) stress, localizes to ER-Golgi contacts (By similarity).</text>
</comment>
<comment type="domain">
    <text evidence="4">The SMP-LTD domain is a barrel-like domain that can bind various types of glycerophospholipids in its interior and mediate their transfer between two adjacent bilayers.</text>
</comment>
<sequence>MFFAFLITYLLGGVTFLPFILFIYLLTRPTHKSEELRIIEPNNDCLTKLDKDIRIQGWIRVTTKFLQGKSGSVKVQEIPQDQLPKSSSDNAVTDRKTISPSGINNQYVIRNPKDVYYATVQAGKLHLFDPVKTSELLHVINLHEYLVVFYPGTVTENELFSNRNAIFLKYPAVSHKKESSTKSLLNKDLYVYGRTPSNKEDWNYALLSYSKISPAIKPLEAPIDFDYASVHHNLTALSSPDTDWLNAFIGRIFLGIHKTEGFKSLVVEKLTKKLSRIKTPGIMTDVKVIDVDVGEAIPTVNGLKFESLSNGGELIVSADIWYEGDCSFKAETTANIKFGSHFPSKTVPLALVIRLTHVSGKVRLLIKPPPSNRVWYAFYEKPRLHLIVEPMVARKQLTNNYLINFITQKLVELVHETIVMPNMNDLAFFIDNEAPIKGGLWDIELFRAPTIQKPAEKDAKAERKKSGLSSSTSEESLNRHISKRSSNSNDTAPSSHIIADKNLEPTSNIQLKKNPDGNLVETSELSDSDENSVLSNKSSTLSKKVVENTSPLKYTHSASKSFIGEVQDSLQALKTKAHKPRSIGGDSSQTTLSETTKKYGSVAKKSFFQGVSDAKSFVKKIKSTYIDDSSSNSPSDIESNYSADDNEISKSKAQNAIDFNVTNTHSPSRSISSEKSYKAAERGQQDKHNDVLVDLNPNVEAEKSNPHSNSQKTSKNDMSRNQRNKYAKEIMTGQPTLHPQGQLPIQNVEQRATHKPLPRPPVQVETREPVRPVPPIPKL</sequence>
<proteinExistence type="evidence at protein level"/>
<accession>O94464</accession>
<accession>A0AAN2L3B7</accession>
<organism>
    <name type="scientific">Schizosaccharomyces pombe (strain 972 / ATCC 24843)</name>
    <name type="common">Fission yeast</name>
    <dbReference type="NCBI Taxonomy" id="284812"/>
    <lineage>
        <taxon>Eukaryota</taxon>
        <taxon>Fungi</taxon>
        <taxon>Dikarya</taxon>
        <taxon>Ascomycota</taxon>
        <taxon>Taphrinomycotina</taxon>
        <taxon>Schizosaccharomycetes</taxon>
        <taxon>Schizosaccharomycetales</taxon>
        <taxon>Schizosaccharomycetaceae</taxon>
        <taxon>Schizosaccharomyces</taxon>
    </lineage>
</organism>
<feature type="chain" id="PRO_0000350757" description="Nucleus-vacuole junction protein 2">
    <location>
        <begin position="1"/>
        <end position="779"/>
    </location>
</feature>
<feature type="topological domain" description="Cytoplasmic" evidence="1">
    <location>
        <begin position="1"/>
        <end position="2"/>
    </location>
</feature>
<feature type="transmembrane region" description="Helical; Signal-anchor for type II membrane protein" evidence="1">
    <location>
        <begin position="3"/>
        <end position="23"/>
    </location>
</feature>
<feature type="topological domain" description="Lumenal" evidence="1">
    <location>
        <begin position="24"/>
        <end position="779"/>
    </location>
</feature>
<feature type="domain" description="SMP-LTD" evidence="4">
    <location>
        <begin position="238"/>
        <end position="429"/>
    </location>
</feature>
<feature type="region of interest" description="Disordered" evidence="5">
    <location>
        <begin position="454"/>
        <end position="539"/>
    </location>
</feature>
<feature type="region of interest" description="Disordered" evidence="5">
    <location>
        <begin position="573"/>
        <end position="592"/>
    </location>
</feature>
<feature type="region of interest" description="Disordered" evidence="5">
    <location>
        <begin position="654"/>
        <end position="779"/>
    </location>
</feature>
<feature type="compositionally biased region" description="Basic and acidic residues" evidence="5">
    <location>
        <begin position="454"/>
        <end position="465"/>
    </location>
</feature>
<feature type="compositionally biased region" description="Polar residues" evidence="5">
    <location>
        <begin position="484"/>
        <end position="494"/>
    </location>
</feature>
<feature type="compositionally biased region" description="Polar residues" evidence="5">
    <location>
        <begin position="660"/>
        <end position="674"/>
    </location>
</feature>
<feature type="compositionally biased region" description="Basic and acidic residues" evidence="5">
    <location>
        <begin position="675"/>
        <end position="691"/>
    </location>
</feature>
<feature type="compositionally biased region" description="Polar residues" evidence="5">
    <location>
        <begin position="733"/>
        <end position="750"/>
    </location>
</feature>
<feature type="modified residue" description="Phosphoserine" evidence="7">
    <location>
        <position position="473"/>
    </location>
</feature>
<feature type="glycosylation site" description="N-linked (GlcNAc...) asparagine" evidence="3">
    <location>
        <position position="233"/>
    </location>
</feature>
<feature type="glycosylation site" description="N-linked (GlcNAc...) asparagine" evidence="3">
    <location>
        <position position="489"/>
    </location>
</feature>
<feature type="glycosylation site" description="N-linked (GlcNAc...) asparagine" evidence="3">
    <location>
        <position position="536"/>
    </location>
</feature>
<feature type="glycosylation site" description="N-linked (GlcNAc...) asparagine" evidence="3">
    <location>
        <position position="640"/>
    </location>
</feature>
<feature type="glycosylation site" description="N-linked (GlcNAc...) asparagine" evidence="3">
    <location>
        <position position="660"/>
    </location>
</feature>
<dbReference type="EMBL" id="CU329671">
    <property type="protein sequence ID" value="CAK9840165.1"/>
    <property type="molecule type" value="Genomic_DNA"/>
</dbReference>
<dbReference type="PIR" id="T39952">
    <property type="entry name" value="T39952"/>
</dbReference>
<dbReference type="RefSeq" id="NP_595864.3">
    <property type="nucleotide sequence ID" value="NM_001021769.3"/>
</dbReference>
<dbReference type="FunCoup" id="O94464">
    <property type="interactions" value="31"/>
</dbReference>
<dbReference type="STRING" id="284812.O94464"/>
<dbReference type="GlyCosmos" id="O94464">
    <property type="glycosylation" value="5 sites, No reported glycans"/>
</dbReference>
<dbReference type="iPTMnet" id="O94464"/>
<dbReference type="PaxDb" id="4896-SPBC23G7.06c.1"/>
<dbReference type="GeneID" id="2540553"/>
<dbReference type="KEGG" id="spo:2540553"/>
<dbReference type="PomBase" id="SPBC23G7.06c">
    <property type="gene designation" value="nvj2"/>
</dbReference>
<dbReference type="eggNOG" id="KOG2238">
    <property type="taxonomic scope" value="Eukaryota"/>
</dbReference>
<dbReference type="HOGENOM" id="CLU_382245_0_0_1"/>
<dbReference type="InParanoid" id="O94464"/>
<dbReference type="PRO" id="PR:O94464"/>
<dbReference type="Proteomes" id="UP000002485">
    <property type="component" value="Chromosome II"/>
</dbReference>
<dbReference type="GO" id="GO:0005737">
    <property type="term" value="C:cytoplasm"/>
    <property type="evidence" value="ECO:0007005"/>
    <property type="project" value="PomBase"/>
</dbReference>
<dbReference type="GO" id="GO:0005783">
    <property type="term" value="C:endoplasmic reticulum"/>
    <property type="evidence" value="ECO:0007669"/>
    <property type="project" value="UniProtKB-KW"/>
</dbReference>
<dbReference type="GO" id="GO:0005789">
    <property type="term" value="C:endoplasmic reticulum membrane"/>
    <property type="evidence" value="ECO:0007669"/>
    <property type="project" value="UniProtKB-SubCell"/>
</dbReference>
<dbReference type="GO" id="GO:0033116">
    <property type="term" value="C:endoplasmic reticulum-Golgi intermediate compartment membrane"/>
    <property type="evidence" value="ECO:0000318"/>
    <property type="project" value="GO_Central"/>
</dbReference>
<dbReference type="GO" id="GO:0016020">
    <property type="term" value="C:membrane"/>
    <property type="evidence" value="ECO:0007669"/>
    <property type="project" value="UniProtKB-KW"/>
</dbReference>
<dbReference type="GO" id="GO:0031965">
    <property type="term" value="C:nuclear membrane"/>
    <property type="evidence" value="ECO:0007669"/>
    <property type="project" value="UniProtKB-SubCell"/>
</dbReference>
<dbReference type="GO" id="GO:0071561">
    <property type="term" value="C:nucleus-vacuole junction"/>
    <property type="evidence" value="ECO:0000266"/>
    <property type="project" value="PomBase"/>
</dbReference>
<dbReference type="GO" id="GO:0008289">
    <property type="term" value="F:lipid binding"/>
    <property type="evidence" value="ECO:0007669"/>
    <property type="project" value="UniProtKB-KW"/>
</dbReference>
<dbReference type="GO" id="GO:0035621">
    <property type="term" value="P:ER to Golgi ceramide transport"/>
    <property type="evidence" value="ECO:0000318"/>
    <property type="project" value="GO_Central"/>
</dbReference>
<dbReference type="GO" id="GO:0006869">
    <property type="term" value="P:lipid transport"/>
    <property type="evidence" value="ECO:0007669"/>
    <property type="project" value="UniProtKB-KW"/>
</dbReference>
<dbReference type="GO" id="GO:1990854">
    <property type="term" value="P:vacuole-ER tethering"/>
    <property type="evidence" value="ECO:0000266"/>
    <property type="project" value="PomBase"/>
</dbReference>
<dbReference type="CDD" id="cd21675">
    <property type="entry name" value="SMP_TEX2"/>
    <property type="match status" value="1"/>
</dbReference>
<dbReference type="InterPro" id="IPR019411">
    <property type="entry name" value="MMM1_dom"/>
</dbReference>
<dbReference type="InterPro" id="IPR031468">
    <property type="entry name" value="SMP_LBD"/>
</dbReference>
<dbReference type="PANTHER" id="PTHR13466:SF19">
    <property type="entry name" value="NUCLEUS-VACUOLE JUNCTION PROTEIN 2"/>
    <property type="match status" value="1"/>
</dbReference>
<dbReference type="PANTHER" id="PTHR13466">
    <property type="entry name" value="TEX2 PROTEIN-RELATED"/>
    <property type="match status" value="1"/>
</dbReference>
<dbReference type="Pfam" id="PF10296">
    <property type="entry name" value="MMM1"/>
    <property type="match status" value="1"/>
</dbReference>
<dbReference type="PROSITE" id="PS51847">
    <property type="entry name" value="SMP"/>
    <property type="match status" value="1"/>
</dbReference>